<dbReference type="EMBL" id="CP000771">
    <property type="protein sequence ID" value="ABS60990.1"/>
    <property type="molecule type" value="Genomic_DNA"/>
</dbReference>
<dbReference type="RefSeq" id="WP_011994303.1">
    <property type="nucleotide sequence ID" value="NC_009718.1"/>
</dbReference>
<dbReference type="SMR" id="A7HM57"/>
<dbReference type="STRING" id="381764.Fnod_1143"/>
<dbReference type="KEGG" id="fno:Fnod_1143"/>
<dbReference type="eggNOG" id="COG0048">
    <property type="taxonomic scope" value="Bacteria"/>
</dbReference>
<dbReference type="HOGENOM" id="CLU_104295_1_2_0"/>
<dbReference type="OrthoDB" id="9802366at2"/>
<dbReference type="Proteomes" id="UP000002415">
    <property type="component" value="Chromosome"/>
</dbReference>
<dbReference type="GO" id="GO:0015935">
    <property type="term" value="C:small ribosomal subunit"/>
    <property type="evidence" value="ECO:0007669"/>
    <property type="project" value="InterPro"/>
</dbReference>
<dbReference type="GO" id="GO:0019843">
    <property type="term" value="F:rRNA binding"/>
    <property type="evidence" value="ECO:0007669"/>
    <property type="project" value="UniProtKB-UniRule"/>
</dbReference>
<dbReference type="GO" id="GO:0003735">
    <property type="term" value="F:structural constituent of ribosome"/>
    <property type="evidence" value="ECO:0007669"/>
    <property type="project" value="InterPro"/>
</dbReference>
<dbReference type="GO" id="GO:0000049">
    <property type="term" value="F:tRNA binding"/>
    <property type="evidence" value="ECO:0007669"/>
    <property type="project" value="UniProtKB-UniRule"/>
</dbReference>
<dbReference type="GO" id="GO:0006412">
    <property type="term" value="P:translation"/>
    <property type="evidence" value="ECO:0007669"/>
    <property type="project" value="UniProtKB-UniRule"/>
</dbReference>
<dbReference type="CDD" id="cd03368">
    <property type="entry name" value="Ribosomal_S12"/>
    <property type="match status" value="1"/>
</dbReference>
<dbReference type="FunFam" id="2.40.50.140:FF:000001">
    <property type="entry name" value="30S ribosomal protein S12"/>
    <property type="match status" value="1"/>
</dbReference>
<dbReference type="Gene3D" id="2.40.50.140">
    <property type="entry name" value="Nucleic acid-binding proteins"/>
    <property type="match status" value="1"/>
</dbReference>
<dbReference type="HAMAP" id="MF_00403_B">
    <property type="entry name" value="Ribosomal_uS12_B"/>
    <property type="match status" value="1"/>
</dbReference>
<dbReference type="InterPro" id="IPR012340">
    <property type="entry name" value="NA-bd_OB-fold"/>
</dbReference>
<dbReference type="InterPro" id="IPR006032">
    <property type="entry name" value="Ribosomal_uS12"/>
</dbReference>
<dbReference type="InterPro" id="IPR005679">
    <property type="entry name" value="Ribosomal_uS12_bac"/>
</dbReference>
<dbReference type="NCBIfam" id="TIGR00981">
    <property type="entry name" value="rpsL_bact"/>
    <property type="match status" value="1"/>
</dbReference>
<dbReference type="PANTHER" id="PTHR11652">
    <property type="entry name" value="30S RIBOSOMAL PROTEIN S12 FAMILY MEMBER"/>
    <property type="match status" value="1"/>
</dbReference>
<dbReference type="Pfam" id="PF00164">
    <property type="entry name" value="Ribosom_S12_S23"/>
    <property type="match status" value="1"/>
</dbReference>
<dbReference type="PIRSF" id="PIRSF002133">
    <property type="entry name" value="Ribosomal_S12/S23"/>
    <property type="match status" value="1"/>
</dbReference>
<dbReference type="PRINTS" id="PR01034">
    <property type="entry name" value="RIBOSOMALS12"/>
</dbReference>
<dbReference type="SUPFAM" id="SSF50249">
    <property type="entry name" value="Nucleic acid-binding proteins"/>
    <property type="match status" value="1"/>
</dbReference>
<dbReference type="PROSITE" id="PS00055">
    <property type="entry name" value="RIBOSOMAL_S12"/>
    <property type="match status" value="1"/>
</dbReference>
<protein>
    <recommendedName>
        <fullName evidence="2">Small ribosomal subunit protein uS12</fullName>
    </recommendedName>
    <alternativeName>
        <fullName evidence="4">30S ribosomal protein S12</fullName>
    </alternativeName>
</protein>
<keyword id="KW-0488">Methylation</keyword>
<keyword id="KW-1185">Reference proteome</keyword>
<keyword id="KW-0687">Ribonucleoprotein</keyword>
<keyword id="KW-0689">Ribosomal protein</keyword>
<keyword id="KW-0694">RNA-binding</keyword>
<keyword id="KW-0699">rRNA-binding</keyword>
<keyword id="KW-0820">tRNA-binding</keyword>
<feature type="chain" id="PRO_1000072256" description="Small ribosomal subunit protein uS12">
    <location>
        <begin position="1"/>
        <end position="134"/>
    </location>
</feature>
<feature type="region of interest" description="Disordered" evidence="3">
    <location>
        <begin position="1"/>
        <end position="30"/>
    </location>
</feature>
<feature type="region of interest" description="Disordered" evidence="3">
    <location>
        <begin position="106"/>
        <end position="134"/>
    </location>
</feature>
<feature type="compositionally biased region" description="Basic residues" evidence="3">
    <location>
        <begin position="112"/>
        <end position="123"/>
    </location>
</feature>
<feature type="compositionally biased region" description="Low complexity" evidence="3">
    <location>
        <begin position="124"/>
        <end position="134"/>
    </location>
</feature>
<feature type="modified residue" description="3-methylthioaspartic acid" evidence="1">
    <location>
        <position position="89"/>
    </location>
</feature>
<name>RS12_FERNB</name>
<organism>
    <name type="scientific">Fervidobacterium nodosum (strain ATCC 35602 / DSM 5306 / Rt17-B1)</name>
    <dbReference type="NCBI Taxonomy" id="381764"/>
    <lineage>
        <taxon>Bacteria</taxon>
        <taxon>Thermotogati</taxon>
        <taxon>Thermotogota</taxon>
        <taxon>Thermotogae</taxon>
        <taxon>Thermotogales</taxon>
        <taxon>Fervidobacteriaceae</taxon>
        <taxon>Fervidobacterium</taxon>
    </lineage>
</organism>
<sequence length="134" mass="14504">MPTINQLVKHGREKVKEKSKSPALQGHPQKRGVCVRVSTMTPKKPNSALRKIAKVRLSNGIEVTAYIPGIGHNLQEHSIVLVRGGRVKDLPGVRYKIIRGALDAAGVENRRQSRSKYGAKRPKAGAAAGAKGKK</sequence>
<gene>
    <name evidence="2" type="primary">rpsL</name>
    <name type="ordered locus">Fnod_1143</name>
</gene>
<evidence type="ECO:0000250" key="1"/>
<evidence type="ECO:0000255" key="2">
    <source>
        <dbReference type="HAMAP-Rule" id="MF_00403"/>
    </source>
</evidence>
<evidence type="ECO:0000256" key="3">
    <source>
        <dbReference type="SAM" id="MobiDB-lite"/>
    </source>
</evidence>
<evidence type="ECO:0000305" key="4"/>
<proteinExistence type="inferred from homology"/>
<reference key="1">
    <citation type="submission" date="2007-07" db="EMBL/GenBank/DDBJ databases">
        <title>Complete sequence of Fervidobacterium nodosum Rt17-B1.</title>
        <authorList>
            <consortium name="US DOE Joint Genome Institute"/>
            <person name="Copeland A."/>
            <person name="Lucas S."/>
            <person name="Lapidus A."/>
            <person name="Barry K."/>
            <person name="Glavina del Rio T."/>
            <person name="Dalin E."/>
            <person name="Tice H."/>
            <person name="Pitluck S."/>
            <person name="Saunders E."/>
            <person name="Brettin T."/>
            <person name="Bruce D."/>
            <person name="Detter J.C."/>
            <person name="Han C."/>
            <person name="Schmutz J."/>
            <person name="Larimer F."/>
            <person name="Land M."/>
            <person name="Hauser L."/>
            <person name="Kyrpides N."/>
            <person name="Mikhailova N."/>
            <person name="Nelson K."/>
            <person name="Gogarten J.P."/>
            <person name="Noll K."/>
            <person name="Richardson P."/>
        </authorList>
    </citation>
    <scope>NUCLEOTIDE SEQUENCE [LARGE SCALE GENOMIC DNA]</scope>
    <source>
        <strain>ATCC 35602 / DSM 5306 / Rt17-B1</strain>
    </source>
</reference>
<comment type="function">
    <text evidence="2">With S4 and S5 plays an important role in translational accuracy.</text>
</comment>
<comment type="function">
    <text evidence="2">Interacts with and stabilizes bases of the 16S rRNA that are involved in tRNA selection in the A site and with the mRNA backbone. Located at the interface of the 30S and 50S subunits, it traverses the body of the 30S subunit contacting proteins on the other side and probably holding the rRNA structure together. The combined cluster of proteins S8, S12 and S17 appears to hold together the shoulder and platform of the 30S subunit.</text>
</comment>
<comment type="subunit">
    <text evidence="2">Part of the 30S ribosomal subunit. Contacts proteins S8 and S17. May interact with IF1 in the 30S initiation complex.</text>
</comment>
<comment type="similarity">
    <text evidence="2">Belongs to the universal ribosomal protein uS12 family.</text>
</comment>
<accession>A7HM57</accession>